<accession>A6WHT1</accession>
<name>RL2_SHEB8</name>
<keyword id="KW-0687">Ribonucleoprotein</keyword>
<keyword id="KW-0689">Ribosomal protein</keyword>
<keyword id="KW-0694">RNA-binding</keyword>
<keyword id="KW-0699">rRNA-binding</keyword>
<reference key="1">
    <citation type="submission" date="2007-07" db="EMBL/GenBank/DDBJ databases">
        <title>Complete sequence of chromosome of Shewanella baltica OS185.</title>
        <authorList>
            <consortium name="US DOE Joint Genome Institute"/>
            <person name="Copeland A."/>
            <person name="Lucas S."/>
            <person name="Lapidus A."/>
            <person name="Barry K."/>
            <person name="Glavina del Rio T."/>
            <person name="Dalin E."/>
            <person name="Tice H."/>
            <person name="Pitluck S."/>
            <person name="Sims D."/>
            <person name="Brettin T."/>
            <person name="Bruce D."/>
            <person name="Detter J.C."/>
            <person name="Han C."/>
            <person name="Schmutz J."/>
            <person name="Larimer F."/>
            <person name="Land M."/>
            <person name="Hauser L."/>
            <person name="Kyrpides N."/>
            <person name="Mikhailova N."/>
            <person name="Brettar I."/>
            <person name="Rodrigues J."/>
            <person name="Konstantinidis K."/>
            <person name="Tiedje J."/>
            <person name="Richardson P."/>
        </authorList>
    </citation>
    <scope>NUCLEOTIDE SEQUENCE [LARGE SCALE GENOMIC DNA]</scope>
    <source>
        <strain>OS185</strain>
    </source>
</reference>
<feature type="chain" id="PRO_1000051951" description="Large ribosomal subunit protein uL2">
    <location>
        <begin position="1"/>
        <end position="274"/>
    </location>
</feature>
<feature type="region of interest" description="Disordered" evidence="2">
    <location>
        <begin position="223"/>
        <end position="274"/>
    </location>
</feature>
<proteinExistence type="inferred from homology"/>
<dbReference type="EMBL" id="CP000753">
    <property type="protein sequence ID" value="ABS06370.1"/>
    <property type="molecule type" value="Genomic_DNA"/>
</dbReference>
<dbReference type="RefSeq" id="WP_006083597.1">
    <property type="nucleotide sequence ID" value="NC_009665.1"/>
</dbReference>
<dbReference type="SMR" id="A6WHT1"/>
<dbReference type="GeneID" id="11770562"/>
<dbReference type="KEGG" id="sbm:Shew185_0199"/>
<dbReference type="HOGENOM" id="CLU_036235_2_1_6"/>
<dbReference type="GO" id="GO:0015934">
    <property type="term" value="C:large ribosomal subunit"/>
    <property type="evidence" value="ECO:0007669"/>
    <property type="project" value="InterPro"/>
</dbReference>
<dbReference type="GO" id="GO:0019843">
    <property type="term" value="F:rRNA binding"/>
    <property type="evidence" value="ECO:0007669"/>
    <property type="project" value="UniProtKB-UniRule"/>
</dbReference>
<dbReference type="GO" id="GO:0003735">
    <property type="term" value="F:structural constituent of ribosome"/>
    <property type="evidence" value="ECO:0007669"/>
    <property type="project" value="InterPro"/>
</dbReference>
<dbReference type="GO" id="GO:0016740">
    <property type="term" value="F:transferase activity"/>
    <property type="evidence" value="ECO:0007669"/>
    <property type="project" value="InterPro"/>
</dbReference>
<dbReference type="GO" id="GO:0002181">
    <property type="term" value="P:cytoplasmic translation"/>
    <property type="evidence" value="ECO:0007669"/>
    <property type="project" value="TreeGrafter"/>
</dbReference>
<dbReference type="FunFam" id="2.30.30.30:FF:000001">
    <property type="entry name" value="50S ribosomal protein L2"/>
    <property type="match status" value="1"/>
</dbReference>
<dbReference type="FunFam" id="2.40.50.140:FF:000003">
    <property type="entry name" value="50S ribosomal protein L2"/>
    <property type="match status" value="1"/>
</dbReference>
<dbReference type="FunFam" id="4.10.950.10:FF:000001">
    <property type="entry name" value="50S ribosomal protein L2"/>
    <property type="match status" value="1"/>
</dbReference>
<dbReference type="Gene3D" id="2.30.30.30">
    <property type="match status" value="1"/>
</dbReference>
<dbReference type="Gene3D" id="2.40.50.140">
    <property type="entry name" value="Nucleic acid-binding proteins"/>
    <property type="match status" value="1"/>
</dbReference>
<dbReference type="Gene3D" id="4.10.950.10">
    <property type="entry name" value="Ribosomal protein L2, domain 3"/>
    <property type="match status" value="1"/>
</dbReference>
<dbReference type="HAMAP" id="MF_01320_B">
    <property type="entry name" value="Ribosomal_uL2_B"/>
    <property type="match status" value="1"/>
</dbReference>
<dbReference type="InterPro" id="IPR012340">
    <property type="entry name" value="NA-bd_OB-fold"/>
</dbReference>
<dbReference type="InterPro" id="IPR014722">
    <property type="entry name" value="Rib_uL2_dom2"/>
</dbReference>
<dbReference type="InterPro" id="IPR002171">
    <property type="entry name" value="Ribosomal_uL2"/>
</dbReference>
<dbReference type="InterPro" id="IPR005880">
    <property type="entry name" value="Ribosomal_uL2_bac/org-type"/>
</dbReference>
<dbReference type="InterPro" id="IPR022669">
    <property type="entry name" value="Ribosomal_uL2_C"/>
</dbReference>
<dbReference type="InterPro" id="IPR022671">
    <property type="entry name" value="Ribosomal_uL2_CS"/>
</dbReference>
<dbReference type="InterPro" id="IPR014726">
    <property type="entry name" value="Ribosomal_uL2_dom3"/>
</dbReference>
<dbReference type="InterPro" id="IPR022666">
    <property type="entry name" value="Ribosomal_uL2_RNA-bd_dom"/>
</dbReference>
<dbReference type="InterPro" id="IPR008991">
    <property type="entry name" value="Translation_prot_SH3-like_sf"/>
</dbReference>
<dbReference type="NCBIfam" id="TIGR01171">
    <property type="entry name" value="rplB_bact"/>
    <property type="match status" value="1"/>
</dbReference>
<dbReference type="PANTHER" id="PTHR13691:SF5">
    <property type="entry name" value="LARGE RIBOSOMAL SUBUNIT PROTEIN UL2M"/>
    <property type="match status" value="1"/>
</dbReference>
<dbReference type="PANTHER" id="PTHR13691">
    <property type="entry name" value="RIBOSOMAL PROTEIN L2"/>
    <property type="match status" value="1"/>
</dbReference>
<dbReference type="Pfam" id="PF00181">
    <property type="entry name" value="Ribosomal_L2"/>
    <property type="match status" value="1"/>
</dbReference>
<dbReference type="Pfam" id="PF03947">
    <property type="entry name" value="Ribosomal_L2_C"/>
    <property type="match status" value="1"/>
</dbReference>
<dbReference type="PIRSF" id="PIRSF002158">
    <property type="entry name" value="Ribosomal_L2"/>
    <property type="match status" value="1"/>
</dbReference>
<dbReference type="SMART" id="SM01383">
    <property type="entry name" value="Ribosomal_L2"/>
    <property type="match status" value="1"/>
</dbReference>
<dbReference type="SMART" id="SM01382">
    <property type="entry name" value="Ribosomal_L2_C"/>
    <property type="match status" value="1"/>
</dbReference>
<dbReference type="SUPFAM" id="SSF50249">
    <property type="entry name" value="Nucleic acid-binding proteins"/>
    <property type="match status" value="1"/>
</dbReference>
<dbReference type="SUPFAM" id="SSF50104">
    <property type="entry name" value="Translation proteins SH3-like domain"/>
    <property type="match status" value="1"/>
</dbReference>
<dbReference type="PROSITE" id="PS00467">
    <property type="entry name" value="RIBOSOMAL_L2"/>
    <property type="match status" value="1"/>
</dbReference>
<organism>
    <name type="scientific">Shewanella baltica (strain OS185)</name>
    <dbReference type="NCBI Taxonomy" id="402882"/>
    <lineage>
        <taxon>Bacteria</taxon>
        <taxon>Pseudomonadati</taxon>
        <taxon>Pseudomonadota</taxon>
        <taxon>Gammaproteobacteria</taxon>
        <taxon>Alteromonadales</taxon>
        <taxon>Shewanellaceae</taxon>
        <taxon>Shewanella</taxon>
    </lineage>
</organism>
<sequence>MAVIKCKPTSPGRRHVVKVVNTDLHKGKPFAGLLAKKSKSGGRNNTGRITVRHVGGGHKQHYRLIDFKRDKDGIPAKIERLEYDPNRTANIALVLYADGERRYILAAKGMQAGDKIQSGVAAEIKTGNAMPLRNIPVGSVVHAVEMKPGKGAQIARSAGAYVQVVARDGAYATLRLRSGEMRKVPVDCRATFGEVGNAEHMLRQLGKAGAKRWRGIRPTVRGVAMNPVDHPHGGGEGRTSGGRHPVTPWGVPTKGYKTRSNKRTDKYIVRRRNK</sequence>
<comment type="function">
    <text evidence="1">One of the primary rRNA binding proteins. Required for association of the 30S and 50S subunits to form the 70S ribosome, for tRNA binding and peptide bond formation. It has been suggested to have peptidyltransferase activity; this is somewhat controversial. Makes several contacts with the 16S rRNA in the 70S ribosome.</text>
</comment>
<comment type="subunit">
    <text evidence="1">Part of the 50S ribosomal subunit. Forms a bridge to the 30S subunit in the 70S ribosome.</text>
</comment>
<comment type="similarity">
    <text evidence="1">Belongs to the universal ribosomal protein uL2 family.</text>
</comment>
<evidence type="ECO:0000255" key="1">
    <source>
        <dbReference type="HAMAP-Rule" id="MF_01320"/>
    </source>
</evidence>
<evidence type="ECO:0000256" key="2">
    <source>
        <dbReference type="SAM" id="MobiDB-lite"/>
    </source>
</evidence>
<evidence type="ECO:0000305" key="3"/>
<gene>
    <name evidence="1" type="primary">rplB</name>
    <name type="ordered locus">Shew185_0199</name>
</gene>
<protein>
    <recommendedName>
        <fullName evidence="1">Large ribosomal subunit protein uL2</fullName>
    </recommendedName>
    <alternativeName>
        <fullName evidence="3">50S ribosomal protein L2</fullName>
    </alternativeName>
</protein>